<proteinExistence type="evidence at protein level"/>
<sequence length="691" mass="76879">MAVKVEYDLKRLRNIGIAAHIDAGKTTTTERILYYTGRIHKIGEVHEGAATMDFMEQERERGITITAAVTTCFWKDHRINIIDTPGHVDFTIEVERSMRVLDGAIVVFDSSQGVEPQSETVWRQAEKYKVPRIAFANKMDKTGADLWLVIRTMQERLGARPVVMQLPIGREDTFSGIIDVLRMKAYTYGNDLGTDIREIPIPEEYLDQAREYHEKLVEVAADFDENIMLKYLEGEEPTEEELVAAIRKGTIDLKITPVFLGSALKNKGVQLLLDAVVDYLPSPLDIPPIKGTTPEGEVVEIHPDPNGPLAALAFKIMADPYVGRLTFIRVYSGTLTSGSYVYNTTKGRKERVARLLRMHANHREEVEELKAGDLGAVVGLKETITGDTLVGEDAPRVILESIEVPEPVIDVAIEPKTKADQEKLSQALARLAEEDPTFRVSTHPETGQTIISGMGELHLEIIVDRLKREFKVDANVGKPQVAYRETITKPVDVEGKFIRQTGGRGQYGHVKIKVEPLPRGSGFEFVNAIVGGVIPKEYIPAVQKGIEEAMQSGPLIGFPVVDIKVTLYDGSYHEVDSSEMAFKIAGSMAIKEAVQKGDPVILEPIMRVEVTTPEEYMGDVIGDLNARRGQILGMEPRGNAQVIRAFVPLAEMFGYATDLRSKTQGRGSFVMFFDHYQEVPKQVQEKLIKGQ</sequence>
<gene>
    <name type="primary">fusA</name>
    <name type="synonym">fus</name>
    <name type="ordered locus">TTHA1695</name>
</gene>
<name>EFG_THET8</name>
<comment type="function">
    <text>Catalyzes the GTP-dependent ribosomal translocation step during translation elongation. During this step, the ribosome changes from the pre-translocational (PRE) to the post-translocational (POST) state as the newly formed A-site-bound peptidyl-tRNA and P-site-bound deacylated tRNA move to the P and E sites, respectively. Catalyzes the coordinated movement of the two tRNA molecules, the mRNA and conformational changes in the ribosome.</text>
</comment>
<comment type="subcellular location">
    <subcellularLocation>
        <location>Cytoplasm</location>
    </subcellularLocation>
</comment>
<comment type="similarity">
    <text evidence="2">Belongs to the TRAFAC class translation factor GTPase superfamily. Classic translation factor GTPase family. EF-G/EF-2 subfamily.</text>
</comment>
<reference key="1">
    <citation type="journal article" date="1989" name="Nucleic Acids Res.">
        <title>Nucleotide sequence of the Thermus thermophilus HB8 gene coding for elongation factor G.</title>
        <authorList>
            <person name="Yakhnin A.V."/>
            <person name="Vorozheykina D.P."/>
            <person name="Matvienko N.I."/>
        </authorList>
    </citation>
    <scope>NUCLEOTIDE SEQUENCE [GENOMIC DNA]</scope>
</reference>
<reference key="2">
    <citation type="submission" date="2004-11" db="EMBL/GenBank/DDBJ databases">
        <title>Complete genome sequence of Thermus thermophilus HB8.</title>
        <authorList>
            <person name="Masui R."/>
            <person name="Kurokawa K."/>
            <person name="Nakagawa N."/>
            <person name="Tokunaga F."/>
            <person name="Koyama Y."/>
            <person name="Shibata T."/>
            <person name="Oshima T."/>
            <person name="Yokoyama S."/>
            <person name="Yasunaga T."/>
            <person name="Kuramitsu S."/>
        </authorList>
    </citation>
    <scope>NUCLEOTIDE SEQUENCE [LARGE SCALE GENOMIC DNA]</scope>
    <source>
        <strain>ATCC 27634 / DSM 579 / HB8</strain>
    </source>
</reference>
<reference key="3">
    <citation type="journal article" date="1990" name="Nucleic Acids Res.">
        <title>Nucleotide sequence of the Thermus thermophilus HB8 rps12 and rps7 genes coding for the ribosomal proteins S12 and S7.</title>
        <authorList>
            <person name="Yakhnin A.V."/>
            <person name="Vorozheykina D.P."/>
            <person name="Matvienko N.I."/>
        </authorList>
    </citation>
    <scope>NUCLEOTIDE SEQUENCE [GENOMIC DNA] OF 1-12</scope>
</reference>
<reference key="4">
    <citation type="journal article" date="1994" name="EMBO J.">
        <title>The crystal structure of elongation factor G complexed with GDP, at 2.7-A resolution.</title>
        <authorList>
            <person name="Czworkowski J."/>
            <person name="Wang J."/>
            <person name="Steitz T.A."/>
            <person name="Moore P.B."/>
        </authorList>
    </citation>
    <scope>X-RAY CRYSTALLOGRAPHY (2.7 ANGSTROMS)</scope>
</reference>
<reference key="5">
    <citation type="journal article" date="1994" name="EMBO J.">
        <title>Three-dimensional structure of the ribosomal translocase: elongation factor G from Thermus thermophilus.</title>
        <authorList>
            <person name="Aevarsson A."/>
            <person name="Brazhnikov E."/>
            <person name="Garber M."/>
            <person name="Zheltonosova J."/>
            <person name="Chirgadze Y."/>
            <person name="Al-Karadaghi S."/>
            <person name="Svensson L.A."/>
            <person name="Liljas A."/>
        </authorList>
    </citation>
    <scope>X-RAY CRYSTALLOGRAPHY (2.85 ANGSTROMS)</scope>
</reference>
<dbReference type="EMBL" id="X16278">
    <property type="protein sequence ID" value="CAA34354.1"/>
    <property type="molecule type" value="Genomic_DNA"/>
</dbReference>
<dbReference type="EMBL" id="AP008226">
    <property type="protein sequence ID" value="BAD71518.1"/>
    <property type="molecule type" value="Genomic_DNA"/>
</dbReference>
<dbReference type="EMBL" id="X52165">
    <property type="protein sequence ID" value="CAA36420.1"/>
    <property type="molecule type" value="Genomic_DNA"/>
</dbReference>
<dbReference type="PIR" id="S15928">
    <property type="entry name" value="EFTWG"/>
</dbReference>
<dbReference type="RefSeq" id="WP_011228848.1">
    <property type="nucleotide sequence ID" value="NC_006461.1"/>
</dbReference>
<dbReference type="RefSeq" id="YP_144961.1">
    <property type="nucleotide sequence ID" value="NC_006461.1"/>
</dbReference>
<dbReference type="PDB" id="1DAR">
    <property type="method" value="X-ray"/>
    <property type="resolution" value="2.40 A"/>
    <property type="chains" value="A=1-691"/>
</dbReference>
<dbReference type="PDB" id="1EFG">
    <property type="method" value="X-ray"/>
    <property type="resolution" value="2.70 A"/>
    <property type="chains" value="A=1-691"/>
</dbReference>
<dbReference type="PDB" id="1ELO">
    <property type="method" value="X-ray"/>
    <property type="resolution" value="2.80 A"/>
    <property type="chains" value="A=1-691"/>
</dbReference>
<dbReference type="PDB" id="1ZN0">
    <property type="method" value="EM"/>
    <property type="resolution" value="15.50 A"/>
    <property type="chains" value="B=6-688"/>
</dbReference>
<dbReference type="PDB" id="2EFG">
    <property type="method" value="X-ray"/>
    <property type="resolution" value="2.60 A"/>
    <property type="chains" value="A=1-691"/>
</dbReference>
<dbReference type="PDB" id="4V5F">
    <property type="method" value="X-ray"/>
    <property type="resolution" value="3.60 A"/>
    <property type="chains" value="AY/CY=1-691"/>
</dbReference>
<dbReference type="PDB" id="4V5M">
    <property type="method" value="EM"/>
    <property type="resolution" value="7.80 A"/>
    <property type="chains" value="AY=1-691"/>
</dbReference>
<dbReference type="PDB" id="4V5N">
    <property type="method" value="EM"/>
    <property type="resolution" value="7.60 A"/>
    <property type="chains" value="AY=1-691"/>
</dbReference>
<dbReference type="PDB" id="4V8U">
    <property type="method" value="X-ray"/>
    <property type="resolution" value="3.70 A"/>
    <property type="chains" value="AY/CY=1-691"/>
</dbReference>
<dbReference type="PDB" id="4V90">
    <property type="method" value="X-ray"/>
    <property type="resolution" value="2.95 A"/>
    <property type="chains" value="AY=1-691"/>
</dbReference>
<dbReference type="PDB" id="4V9H">
    <property type="method" value="X-ray"/>
    <property type="resolution" value="2.86 A"/>
    <property type="chains" value="AY=10-689"/>
</dbReference>
<dbReference type="PDB" id="4WPO">
    <property type="method" value="X-ray"/>
    <property type="resolution" value="2.80 A"/>
    <property type="chains" value="BZ/DZ=8-691"/>
</dbReference>
<dbReference type="PDB" id="4WQF">
    <property type="method" value="X-ray"/>
    <property type="resolution" value="2.80 A"/>
    <property type="chains" value="BZ/DZ=8-691"/>
</dbReference>
<dbReference type="PDB" id="4WQU">
    <property type="method" value="X-ray"/>
    <property type="resolution" value="2.80 A"/>
    <property type="chains" value="BZ/DZ=8-691"/>
</dbReference>
<dbReference type="PDB" id="4WQY">
    <property type="method" value="X-ray"/>
    <property type="resolution" value="2.80 A"/>
    <property type="chains" value="BZ/DZ=8-691"/>
</dbReference>
<dbReference type="PDB" id="5HAU">
    <property type="method" value="X-ray"/>
    <property type="resolution" value="3.00 A"/>
    <property type="chains" value="1z/2z=8-691"/>
</dbReference>
<dbReference type="PDB" id="5OT7">
    <property type="method" value="EM"/>
    <property type="resolution" value="3.80 A"/>
    <property type="chains" value="U=4-690"/>
</dbReference>
<dbReference type="PDB" id="6UCQ">
    <property type="method" value="X-ray"/>
    <property type="resolution" value="3.50 A"/>
    <property type="chains" value="1v/2v=8-691"/>
</dbReference>
<dbReference type="PDBsum" id="1DAR"/>
<dbReference type="PDBsum" id="1EFG"/>
<dbReference type="PDBsum" id="1ELO"/>
<dbReference type="PDBsum" id="1ZN0"/>
<dbReference type="PDBsum" id="2EFG"/>
<dbReference type="PDBsum" id="4V5F"/>
<dbReference type="PDBsum" id="4V5M"/>
<dbReference type="PDBsum" id="4V5N"/>
<dbReference type="PDBsum" id="4V8U"/>
<dbReference type="PDBsum" id="4V90"/>
<dbReference type="PDBsum" id="4V9H"/>
<dbReference type="PDBsum" id="4WPO"/>
<dbReference type="PDBsum" id="4WQF"/>
<dbReference type="PDBsum" id="4WQU"/>
<dbReference type="PDBsum" id="4WQY"/>
<dbReference type="PDBsum" id="5HAU"/>
<dbReference type="PDBsum" id="5OT7"/>
<dbReference type="PDBsum" id="6UCQ"/>
<dbReference type="EMDB" id="EMD-1127"/>
<dbReference type="EMDB" id="EMD-3852"/>
<dbReference type="SMR" id="Q5SHN5"/>
<dbReference type="IntAct" id="Q5SHN5">
    <property type="interactions" value="52"/>
</dbReference>
<dbReference type="EnsemblBacteria" id="BAD71518">
    <property type="protein sequence ID" value="BAD71518"/>
    <property type="gene ID" value="BAD71518"/>
</dbReference>
<dbReference type="GeneID" id="3169680"/>
<dbReference type="KEGG" id="ttj:TTHA1695"/>
<dbReference type="PATRIC" id="fig|300852.9.peg.1665"/>
<dbReference type="eggNOG" id="COG0480">
    <property type="taxonomic scope" value="Bacteria"/>
</dbReference>
<dbReference type="HOGENOM" id="CLU_002794_4_1_0"/>
<dbReference type="PhylomeDB" id="Q5SHN5"/>
<dbReference type="EvolutionaryTrace" id="Q5SHN5"/>
<dbReference type="PRO" id="PR:Q5SHN5"/>
<dbReference type="Proteomes" id="UP000000532">
    <property type="component" value="Chromosome"/>
</dbReference>
<dbReference type="GO" id="GO:0005737">
    <property type="term" value="C:cytoplasm"/>
    <property type="evidence" value="ECO:0007669"/>
    <property type="project" value="UniProtKB-SubCell"/>
</dbReference>
<dbReference type="GO" id="GO:0005525">
    <property type="term" value="F:GTP binding"/>
    <property type="evidence" value="ECO:0007669"/>
    <property type="project" value="UniProtKB-UniRule"/>
</dbReference>
<dbReference type="GO" id="GO:0003924">
    <property type="term" value="F:GTPase activity"/>
    <property type="evidence" value="ECO:0007669"/>
    <property type="project" value="InterPro"/>
</dbReference>
<dbReference type="GO" id="GO:0003746">
    <property type="term" value="F:translation elongation factor activity"/>
    <property type="evidence" value="ECO:0007669"/>
    <property type="project" value="UniProtKB-UniRule"/>
</dbReference>
<dbReference type="GO" id="GO:0032790">
    <property type="term" value="P:ribosome disassembly"/>
    <property type="evidence" value="ECO:0007669"/>
    <property type="project" value="TreeGrafter"/>
</dbReference>
<dbReference type="CDD" id="cd01886">
    <property type="entry name" value="EF-G"/>
    <property type="match status" value="1"/>
</dbReference>
<dbReference type="CDD" id="cd16262">
    <property type="entry name" value="EFG_III"/>
    <property type="match status" value="1"/>
</dbReference>
<dbReference type="CDD" id="cd01434">
    <property type="entry name" value="EFG_mtEFG1_IV"/>
    <property type="match status" value="1"/>
</dbReference>
<dbReference type="CDD" id="cd03713">
    <property type="entry name" value="EFG_mtEFG_C"/>
    <property type="match status" value="1"/>
</dbReference>
<dbReference type="CDD" id="cd04088">
    <property type="entry name" value="EFG_mtEFG_II"/>
    <property type="match status" value="1"/>
</dbReference>
<dbReference type="FunFam" id="2.40.30.10:FF:000006">
    <property type="entry name" value="Elongation factor G"/>
    <property type="match status" value="1"/>
</dbReference>
<dbReference type="FunFam" id="3.30.230.10:FF:000003">
    <property type="entry name" value="Elongation factor G"/>
    <property type="match status" value="1"/>
</dbReference>
<dbReference type="FunFam" id="3.30.70.240:FF:000001">
    <property type="entry name" value="Elongation factor G"/>
    <property type="match status" value="1"/>
</dbReference>
<dbReference type="FunFam" id="3.30.70.870:FF:000001">
    <property type="entry name" value="Elongation factor G"/>
    <property type="match status" value="1"/>
</dbReference>
<dbReference type="FunFam" id="3.40.50.300:FF:000029">
    <property type="entry name" value="Elongation factor G"/>
    <property type="match status" value="1"/>
</dbReference>
<dbReference type="Gene3D" id="3.30.230.10">
    <property type="match status" value="1"/>
</dbReference>
<dbReference type="Gene3D" id="3.30.70.240">
    <property type="match status" value="1"/>
</dbReference>
<dbReference type="Gene3D" id="3.30.70.870">
    <property type="entry name" value="Elongation Factor G (Translational Gtpase), domain 3"/>
    <property type="match status" value="1"/>
</dbReference>
<dbReference type="Gene3D" id="3.40.50.300">
    <property type="entry name" value="P-loop containing nucleotide triphosphate hydrolases"/>
    <property type="match status" value="1"/>
</dbReference>
<dbReference type="Gene3D" id="2.40.30.10">
    <property type="entry name" value="Translation factors"/>
    <property type="match status" value="1"/>
</dbReference>
<dbReference type="HAMAP" id="MF_00054_B">
    <property type="entry name" value="EF_G_EF_2_B"/>
    <property type="match status" value="1"/>
</dbReference>
<dbReference type="InterPro" id="IPR041095">
    <property type="entry name" value="EFG_II"/>
</dbReference>
<dbReference type="InterPro" id="IPR009022">
    <property type="entry name" value="EFG_III"/>
</dbReference>
<dbReference type="InterPro" id="IPR035647">
    <property type="entry name" value="EFG_III/V"/>
</dbReference>
<dbReference type="InterPro" id="IPR047872">
    <property type="entry name" value="EFG_IV"/>
</dbReference>
<dbReference type="InterPro" id="IPR035649">
    <property type="entry name" value="EFG_V"/>
</dbReference>
<dbReference type="InterPro" id="IPR000640">
    <property type="entry name" value="EFG_V-like"/>
</dbReference>
<dbReference type="InterPro" id="IPR004161">
    <property type="entry name" value="EFTu-like_2"/>
</dbReference>
<dbReference type="InterPro" id="IPR031157">
    <property type="entry name" value="G_TR_CS"/>
</dbReference>
<dbReference type="InterPro" id="IPR027417">
    <property type="entry name" value="P-loop_NTPase"/>
</dbReference>
<dbReference type="InterPro" id="IPR020568">
    <property type="entry name" value="Ribosomal_Su5_D2-typ_SF"/>
</dbReference>
<dbReference type="InterPro" id="IPR014721">
    <property type="entry name" value="Ribsml_uS5_D2-typ_fold_subgr"/>
</dbReference>
<dbReference type="InterPro" id="IPR005225">
    <property type="entry name" value="Small_GTP-bd"/>
</dbReference>
<dbReference type="InterPro" id="IPR000795">
    <property type="entry name" value="T_Tr_GTP-bd_dom"/>
</dbReference>
<dbReference type="InterPro" id="IPR009000">
    <property type="entry name" value="Transl_B-barrel_sf"/>
</dbReference>
<dbReference type="InterPro" id="IPR004540">
    <property type="entry name" value="Transl_elong_EFG/EF2"/>
</dbReference>
<dbReference type="InterPro" id="IPR005517">
    <property type="entry name" value="Transl_elong_EFG/EF2_IV"/>
</dbReference>
<dbReference type="NCBIfam" id="TIGR00484">
    <property type="entry name" value="EF-G"/>
    <property type="match status" value="1"/>
</dbReference>
<dbReference type="NCBIfam" id="NF009379">
    <property type="entry name" value="PRK12740.1-3"/>
    <property type="match status" value="1"/>
</dbReference>
<dbReference type="NCBIfam" id="NF009381">
    <property type="entry name" value="PRK12740.1-5"/>
    <property type="match status" value="1"/>
</dbReference>
<dbReference type="NCBIfam" id="NF009891">
    <property type="entry name" value="PRK13351.1-1"/>
    <property type="match status" value="1"/>
</dbReference>
<dbReference type="NCBIfam" id="TIGR00231">
    <property type="entry name" value="small_GTP"/>
    <property type="match status" value="1"/>
</dbReference>
<dbReference type="PANTHER" id="PTHR43261:SF1">
    <property type="entry name" value="RIBOSOME-RELEASING FACTOR 2, MITOCHONDRIAL"/>
    <property type="match status" value="1"/>
</dbReference>
<dbReference type="PANTHER" id="PTHR43261">
    <property type="entry name" value="TRANSLATION ELONGATION FACTOR G-RELATED"/>
    <property type="match status" value="1"/>
</dbReference>
<dbReference type="Pfam" id="PF00679">
    <property type="entry name" value="EFG_C"/>
    <property type="match status" value="1"/>
</dbReference>
<dbReference type="Pfam" id="PF14492">
    <property type="entry name" value="EFG_III"/>
    <property type="match status" value="1"/>
</dbReference>
<dbReference type="Pfam" id="PF03764">
    <property type="entry name" value="EFG_IV"/>
    <property type="match status" value="1"/>
</dbReference>
<dbReference type="Pfam" id="PF00009">
    <property type="entry name" value="GTP_EFTU"/>
    <property type="match status" value="1"/>
</dbReference>
<dbReference type="Pfam" id="PF03144">
    <property type="entry name" value="GTP_EFTU_D2"/>
    <property type="match status" value="1"/>
</dbReference>
<dbReference type="PRINTS" id="PR00315">
    <property type="entry name" value="ELONGATNFCT"/>
</dbReference>
<dbReference type="SMART" id="SM00838">
    <property type="entry name" value="EFG_C"/>
    <property type="match status" value="1"/>
</dbReference>
<dbReference type="SMART" id="SM00889">
    <property type="entry name" value="EFG_IV"/>
    <property type="match status" value="1"/>
</dbReference>
<dbReference type="SUPFAM" id="SSF54980">
    <property type="entry name" value="EF-G C-terminal domain-like"/>
    <property type="match status" value="2"/>
</dbReference>
<dbReference type="SUPFAM" id="SSF52540">
    <property type="entry name" value="P-loop containing nucleoside triphosphate hydrolases"/>
    <property type="match status" value="1"/>
</dbReference>
<dbReference type="SUPFAM" id="SSF54211">
    <property type="entry name" value="Ribosomal protein S5 domain 2-like"/>
    <property type="match status" value="1"/>
</dbReference>
<dbReference type="SUPFAM" id="SSF50447">
    <property type="entry name" value="Translation proteins"/>
    <property type="match status" value="1"/>
</dbReference>
<dbReference type="PROSITE" id="PS00301">
    <property type="entry name" value="G_TR_1"/>
    <property type="match status" value="1"/>
</dbReference>
<dbReference type="PROSITE" id="PS51722">
    <property type="entry name" value="G_TR_2"/>
    <property type="match status" value="1"/>
</dbReference>
<keyword id="KW-0002">3D-structure</keyword>
<keyword id="KW-0963">Cytoplasm</keyword>
<keyword id="KW-0251">Elongation factor</keyword>
<keyword id="KW-0342">GTP-binding</keyword>
<keyword id="KW-0547">Nucleotide-binding</keyword>
<keyword id="KW-0648">Protein biosynthesis</keyword>
<keyword id="KW-1185">Reference proteome</keyword>
<accession>Q5SHN5</accession>
<evidence type="ECO:0000250" key="1"/>
<evidence type="ECO:0000305" key="2"/>
<evidence type="ECO:0007829" key="3">
    <source>
        <dbReference type="PDB" id="1DAR"/>
    </source>
</evidence>
<evidence type="ECO:0007829" key="4">
    <source>
        <dbReference type="PDB" id="1ELO"/>
    </source>
</evidence>
<feature type="chain" id="PRO_0000091249" description="Elongation factor G">
    <location>
        <begin position="1"/>
        <end position="691"/>
    </location>
</feature>
<feature type="domain" description="tr-type G">
    <location>
        <begin position="10"/>
        <end position="284"/>
    </location>
</feature>
<feature type="binding site" evidence="1">
    <location>
        <begin position="19"/>
        <end position="26"/>
    </location>
    <ligand>
        <name>GTP</name>
        <dbReference type="ChEBI" id="CHEBI:37565"/>
    </ligand>
</feature>
<feature type="binding site" evidence="1">
    <location>
        <begin position="83"/>
        <end position="87"/>
    </location>
    <ligand>
        <name>GTP</name>
        <dbReference type="ChEBI" id="CHEBI:37565"/>
    </ligand>
</feature>
<feature type="binding site" evidence="1">
    <location>
        <begin position="137"/>
        <end position="140"/>
    </location>
    <ligand>
        <name>GTP</name>
        <dbReference type="ChEBI" id="CHEBI:37565"/>
    </ligand>
</feature>
<feature type="helix" evidence="3">
    <location>
        <begin position="9"/>
        <end position="11"/>
    </location>
</feature>
<feature type="strand" evidence="3">
    <location>
        <begin position="12"/>
        <end position="19"/>
    </location>
</feature>
<feature type="helix" evidence="4">
    <location>
        <begin position="21"/>
        <end position="24"/>
    </location>
</feature>
<feature type="helix" evidence="3">
    <location>
        <begin position="25"/>
        <end position="36"/>
    </location>
</feature>
<feature type="strand" evidence="3">
    <location>
        <begin position="69"/>
        <end position="74"/>
    </location>
</feature>
<feature type="strand" evidence="3">
    <location>
        <begin position="77"/>
        <end position="82"/>
    </location>
</feature>
<feature type="helix" evidence="3">
    <location>
        <begin position="91"/>
        <end position="100"/>
    </location>
</feature>
<feature type="strand" evidence="3">
    <location>
        <begin position="102"/>
        <end position="109"/>
    </location>
</feature>
<feature type="turn" evidence="3">
    <location>
        <begin position="110"/>
        <end position="112"/>
    </location>
</feature>
<feature type="helix" evidence="3">
    <location>
        <begin position="116"/>
        <end position="127"/>
    </location>
</feature>
<feature type="strand" evidence="3">
    <location>
        <begin position="132"/>
        <end position="137"/>
    </location>
</feature>
<feature type="helix" evidence="3">
    <location>
        <begin position="146"/>
        <end position="155"/>
    </location>
</feature>
<feature type="strand" evidence="3">
    <location>
        <begin position="161"/>
        <end position="163"/>
    </location>
</feature>
<feature type="strand" evidence="3">
    <location>
        <begin position="165"/>
        <end position="169"/>
    </location>
</feature>
<feature type="helix" evidence="3">
    <location>
        <begin position="171"/>
        <end position="173"/>
    </location>
</feature>
<feature type="strand" evidence="3">
    <location>
        <begin position="176"/>
        <end position="179"/>
    </location>
</feature>
<feature type="turn" evidence="3">
    <location>
        <begin position="180"/>
        <end position="183"/>
    </location>
</feature>
<feature type="strand" evidence="3">
    <location>
        <begin position="184"/>
        <end position="188"/>
    </location>
</feature>
<feature type="strand" evidence="4">
    <location>
        <begin position="190"/>
        <end position="194"/>
    </location>
</feature>
<feature type="strand" evidence="3">
    <location>
        <begin position="196"/>
        <end position="199"/>
    </location>
</feature>
<feature type="helix" evidence="3">
    <location>
        <begin position="203"/>
        <end position="205"/>
    </location>
</feature>
<feature type="helix" evidence="3">
    <location>
        <begin position="206"/>
        <end position="220"/>
    </location>
</feature>
<feature type="turn" evidence="3">
    <location>
        <begin position="221"/>
        <end position="223"/>
    </location>
</feature>
<feature type="helix" evidence="3">
    <location>
        <begin position="225"/>
        <end position="233"/>
    </location>
</feature>
<feature type="helix" evidence="3">
    <location>
        <begin position="239"/>
        <end position="251"/>
    </location>
</feature>
<feature type="strand" evidence="3">
    <location>
        <begin position="256"/>
        <end position="260"/>
    </location>
</feature>
<feature type="helix" evidence="3">
    <location>
        <begin position="263"/>
        <end position="265"/>
    </location>
</feature>
<feature type="helix" evidence="3">
    <location>
        <begin position="269"/>
        <end position="279"/>
    </location>
</feature>
<feature type="turn" evidence="3">
    <location>
        <begin position="283"/>
        <end position="285"/>
    </location>
</feature>
<feature type="strand" evidence="3">
    <location>
        <begin position="289"/>
        <end position="292"/>
    </location>
</feature>
<feature type="strand" evidence="3">
    <location>
        <begin position="294"/>
        <end position="296"/>
    </location>
</feature>
<feature type="strand" evidence="3">
    <location>
        <begin position="298"/>
        <end position="301"/>
    </location>
</feature>
<feature type="strand" evidence="3">
    <location>
        <begin position="310"/>
        <end position="319"/>
    </location>
</feature>
<feature type="turn" evidence="3">
    <location>
        <begin position="320"/>
        <end position="322"/>
    </location>
</feature>
<feature type="strand" evidence="3">
    <location>
        <begin position="323"/>
        <end position="338"/>
    </location>
</feature>
<feature type="strand" evidence="3">
    <location>
        <begin position="340"/>
        <end position="343"/>
    </location>
</feature>
<feature type="turn" evidence="3">
    <location>
        <begin position="344"/>
        <end position="346"/>
    </location>
</feature>
<feature type="strand" evidence="3">
    <location>
        <begin position="349"/>
        <end position="351"/>
    </location>
</feature>
<feature type="strand" evidence="3">
    <location>
        <begin position="354"/>
        <end position="358"/>
    </location>
</feature>
<feature type="strand" evidence="3">
    <location>
        <begin position="363"/>
        <end position="370"/>
    </location>
</feature>
<feature type="strand" evidence="3">
    <location>
        <begin position="374"/>
        <end position="378"/>
    </location>
</feature>
<feature type="strand" evidence="3">
    <location>
        <begin position="388"/>
        <end position="391"/>
    </location>
</feature>
<feature type="turn" evidence="4">
    <location>
        <begin position="426"/>
        <end position="433"/>
    </location>
</feature>
<feature type="strand" evidence="4">
    <location>
        <begin position="436"/>
        <end position="438"/>
    </location>
</feature>
<feature type="strand" evidence="3">
    <location>
        <begin position="439"/>
        <end position="441"/>
    </location>
</feature>
<feature type="strand" evidence="3">
    <location>
        <begin position="449"/>
        <end position="454"/>
    </location>
</feature>
<feature type="helix" evidence="4">
    <location>
        <begin position="458"/>
        <end position="463"/>
    </location>
</feature>
<feature type="strand" evidence="4">
    <location>
        <begin position="464"/>
        <end position="467"/>
    </location>
</feature>
<feature type="strand" evidence="3">
    <location>
        <begin position="470"/>
        <end position="473"/>
    </location>
</feature>
<feature type="turn" evidence="3">
    <location>
        <begin position="474"/>
        <end position="476"/>
    </location>
</feature>
<feature type="strand" evidence="3">
    <location>
        <begin position="484"/>
        <end position="486"/>
    </location>
</feature>
<feature type="strand" evidence="3">
    <location>
        <begin position="491"/>
        <end position="499"/>
    </location>
</feature>
<feature type="strand" evidence="3">
    <location>
        <begin position="502"/>
        <end position="504"/>
    </location>
</feature>
<feature type="strand" evidence="3">
    <location>
        <begin position="506"/>
        <end position="516"/>
    </location>
</feature>
<feature type="strand" evidence="3">
    <location>
        <begin position="523"/>
        <end position="527"/>
    </location>
</feature>
<feature type="turn" evidence="3">
    <location>
        <begin position="536"/>
        <end position="538"/>
    </location>
</feature>
<feature type="helix" evidence="3">
    <location>
        <begin position="539"/>
        <end position="549"/>
    </location>
</feature>
<feature type="turn" evidence="3">
    <location>
        <begin position="554"/>
        <end position="556"/>
    </location>
</feature>
<feature type="strand" evidence="3">
    <location>
        <begin position="562"/>
        <end position="570"/>
    </location>
</feature>
<feature type="turn" evidence="3">
    <location>
        <begin position="574"/>
        <end position="576"/>
    </location>
</feature>
<feature type="helix" evidence="3">
    <location>
        <begin position="579"/>
        <end position="595"/>
    </location>
</feature>
<feature type="strand" evidence="3">
    <location>
        <begin position="600"/>
        <end position="612"/>
    </location>
</feature>
<feature type="turn" evidence="3">
    <location>
        <begin position="614"/>
        <end position="618"/>
    </location>
</feature>
<feature type="helix" evidence="3">
    <location>
        <begin position="619"/>
        <end position="626"/>
    </location>
</feature>
<feature type="strand" evidence="3">
    <location>
        <begin position="631"/>
        <end position="637"/>
    </location>
</feature>
<feature type="strand" evidence="3">
    <location>
        <begin position="640"/>
        <end position="648"/>
    </location>
</feature>
<feature type="turn" evidence="3">
    <location>
        <begin position="649"/>
        <end position="651"/>
    </location>
</feature>
<feature type="strand" evidence="3">
    <location>
        <begin position="652"/>
        <end position="654"/>
    </location>
</feature>
<feature type="helix" evidence="3">
    <location>
        <begin position="655"/>
        <end position="662"/>
    </location>
</feature>
<feature type="turn" evidence="3">
    <location>
        <begin position="663"/>
        <end position="665"/>
    </location>
</feature>
<feature type="strand" evidence="3">
    <location>
        <begin position="668"/>
        <end position="678"/>
    </location>
</feature>
<feature type="helix" evidence="3">
    <location>
        <begin position="681"/>
        <end position="688"/>
    </location>
</feature>
<organism>
    <name type="scientific">Thermus thermophilus (strain ATCC 27634 / DSM 579 / HB8)</name>
    <dbReference type="NCBI Taxonomy" id="300852"/>
    <lineage>
        <taxon>Bacteria</taxon>
        <taxon>Thermotogati</taxon>
        <taxon>Deinococcota</taxon>
        <taxon>Deinococci</taxon>
        <taxon>Thermales</taxon>
        <taxon>Thermaceae</taxon>
        <taxon>Thermus</taxon>
    </lineage>
</organism>
<protein>
    <recommendedName>
        <fullName>Elongation factor G</fullName>
        <shortName>EF-G</shortName>
    </recommendedName>
</protein>